<organism>
    <name type="scientific">Lactobacillus delbrueckii subsp. bulgaricus (strain ATCC BAA-365 / Lb-18)</name>
    <dbReference type="NCBI Taxonomy" id="321956"/>
    <lineage>
        <taxon>Bacteria</taxon>
        <taxon>Bacillati</taxon>
        <taxon>Bacillota</taxon>
        <taxon>Bacilli</taxon>
        <taxon>Lactobacillales</taxon>
        <taxon>Lactobacillaceae</taxon>
        <taxon>Lactobacillus</taxon>
    </lineage>
</organism>
<reference key="1">
    <citation type="journal article" date="2006" name="Proc. Natl. Acad. Sci. U.S.A.">
        <title>Comparative genomics of the lactic acid bacteria.</title>
        <authorList>
            <person name="Makarova K.S."/>
            <person name="Slesarev A."/>
            <person name="Wolf Y.I."/>
            <person name="Sorokin A."/>
            <person name="Mirkin B."/>
            <person name="Koonin E.V."/>
            <person name="Pavlov A."/>
            <person name="Pavlova N."/>
            <person name="Karamychev V."/>
            <person name="Polouchine N."/>
            <person name="Shakhova V."/>
            <person name="Grigoriev I."/>
            <person name="Lou Y."/>
            <person name="Rohksar D."/>
            <person name="Lucas S."/>
            <person name="Huang K."/>
            <person name="Goodstein D.M."/>
            <person name="Hawkins T."/>
            <person name="Plengvidhya V."/>
            <person name="Welker D."/>
            <person name="Hughes J."/>
            <person name="Goh Y."/>
            <person name="Benson A."/>
            <person name="Baldwin K."/>
            <person name="Lee J.-H."/>
            <person name="Diaz-Muniz I."/>
            <person name="Dosti B."/>
            <person name="Smeianov V."/>
            <person name="Wechter W."/>
            <person name="Barabote R."/>
            <person name="Lorca G."/>
            <person name="Altermann E."/>
            <person name="Barrangou R."/>
            <person name="Ganesan B."/>
            <person name="Xie Y."/>
            <person name="Rawsthorne H."/>
            <person name="Tamir D."/>
            <person name="Parker C."/>
            <person name="Breidt F."/>
            <person name="Broadbent J.R."/>
            <person name="Hutkins R."/>
            <person name="O'Sullivan D."/>
            <person name="Steele J."/>
            <person name="Unlu G."/>
            <person name="Saier M.H. Jr."/>
            <person name="Klaenhammer T."/>
            <person name="Richardson P."/>
            <person name="Kozyavkin S."/>
            <person name="Weimer B.C."/>
            <person name="Mills D.A."/>
        </authorList>
    </citation>
    <scope>NUCLEOTIDE SEQUENCE [LARGE SCALE GENOMIC DNA]</scope>
    <source>
        <strain>ATCC BAA-365 / Lb-18</strain>
    </source>
</reference>
<proteinExistence type="inferred from homology"/>
<gene>
    <name evidence="1" type="primary">purL</name>
    <name type="ordered locus">LBUL_1335</name>
</gene>
<accession>Q049L7</accession>
<dbReference type="EC" id="6.3.5.3" evidence="1"/>
<dbReference type="EMBL" id="CP000412">
    <property type="protein sequence ID" value="ABJ58855.1"/>
    <property type="molecule type" value="Genomic_DNA"/>
</dbReference>
<dbReference type="RefSeq" id="WP_004560840.1">
    <property type="nucleotide sequence ID" value="NC_008529.1"/>
</dbReference>
<dbReference type="SMR" id="Q049L7"/>
<dbReference type="KEGG" id="lbu:LBUL_1335"/>
<dbReference type="HOGENOM" id="CLU_003100_0_1_9"/>
<dbReference type="BioCyc" id="LDEL321956:LBUL_RS06300-MONOMER"/>
<dbReference type="UniPathway" id="UPA00074">
    <property type="reaction ID" value="UER00128"/>
</dbReference>
<dbReference type="GO" id="GO:0005737">
    <property type="term" value="C:cytoplasm"/>
    <property type="evidence" value="ECO:0007669"/>
    <property type="project" value="UniProtKB-SubCell"/>
</dbReference>
<dbReference type="GO" id="GO:0005524">
    <property type="term" value="F:ATP binding"/>
    <property type="evidence" value="ECO:0007669"/>
    <property type="project" value="UniProtKB-UniRule"/>
</dbReference>
<dbReference type="GO" id="GO:0000287">
    <property type="term" value="F:magnesium ion binding"/>
    <property type="evidence" value="ECO:0007669"/>
    <property type="project" value="UniProtKB-UniRule"/>
</dbReference>
<dbReference type="GO" id="GO:0004642">
    <property type="term" value="F:phosphoribosylformylglycinamidine synthase activity"/>
    <property type="evidence" value="ECO:0007669"/>
    <property type="project" value="UniProtKB-UniRule"/>
</dbReference>
<dbReference type="GO" id="GO:0006189">
    <property type="term" value="P:'de novo' IMP biosynthetic process"/>
    <property type="evidence" value="ECO:0007669"/>
    <property type="project" value="UniProtKB-UniRule"/>
</dbReference>
<dbReference type="CDD" id="cd02203">
    <property type="entry name" value="PurL_repeat1"/>
    <property type="match status" value="1"/>
</dbReference>
<dbReference type="CDD" id="cd02204">
    <property type="entry name" value="PurL_repeat2"/>
    <property type="match status" value="1"/>
</dbReference>
<dbReference type="FunFam" id="3.30.1330.10:FF:000004">
    <property type="entry name" value="Phosphoribosylformylglycinamidine synthase subunit PurL"/>
    <property type="match status" value="1"/>
</dbReference>
<dbReference type="Gene3D" id="3.90.650.10">
    <property type="entry name" value="PurM-like C-terminal domain"/>
    <property type="match status" value="2"/>
</dbReference>
<dbReference type="Gene3D" id="3.30.1330.10">
    <property type="entry name" value="PurM-like, N-terminal domain"/>
    <property type="match status" value="2"/>
</dbReference>
<dbReference type="HAMAP" id="MF_00420">
    <property type="entry name" value="PurL_2"/>
    <property type="match status" value="1"/>
</dbReference>
<dbReference type="InterPro" id="IPR010074">
    <property type="entry name" value="PRibForGlyAmidine_synth_PurL"/>
</dbReference>
<dbReference type="InterPro" id="IPR041609">
    <property type="entry name" value="PurL_linker"/>
</dbReference>
<dbReference type="InterPro" id="IPR010918">
    <property type="entry name" value="PurM-like_C_dom"/>
</dbReference>
<dbReference type="InterPro" id="IPR036676">
    <property type="entry name" value="PurM-like_C_sf"/>
</dbReference>
<dbReference type="InterPro" id="IPR016188">
    <property type="entry name" value="PurM-like_N"/>
</dbReference>
<dbReference type="InterPro" id="IPR036921">
    <property type="entry name" value="PurM-like_N_sf"/>
</dbReference>
<dbReference type="NCBIfam" id="TIGR01736">
    <property type="entry name" value="FGAM_synth_II"/>
    <property type="match status" value="1"/>
</dbReference>
<dbReference type="NCBIfam" id="NF002290">
    <property type="entry name" value="PRK01213.1"/>
    <property type="match status" value="1"/>
</dbReference>
<dbReference type="PANTHER" id="PTHR43555">
    <property type="entry name" value="PHOSPHORIBOSYLFORMYLGLYCINAMIDINE SYNTHASE SUBUNIT PURL"/>
    <property type="match status" value="1"/>
</dbReference>
<dbReference type="PANTHER" id="PTHR43555:SF1">
    <property type="entry name" value="PHOSPHORIBOSYLFORMYLGLYCINAMIDINE SYNTHASE SUBUNIT PURL"/>
    <property type="match status" value="1"/>
</dbReference>
<dbReference type="Pfam" id="PF00586">
    <property type="entry name" value="AIRS"/>
    <property type="match status" value="2"/>
</dbReference>
<dbReference type="Pfam" id="PF02769">
    <property type="entry name" value="AIRS_C"/>
    <property type="match status" value="2"/>
</dbReference>
<dbReference type="Pfam" id="PF18072">
    <property type="entry name" value="FGAR-AT_linker"/>
    <property type="match status" value="1"/>
</dbReference>
<dbReference type="PIRSF" id="PIRSF001587">
    <property type="entry name" value="FGAM_synthase_II"/>
    <property type="match status" value="1"/>
</dbReference>
<dbReference type="SUPFAM" id="SSF56042">
    <property type="entry name" value="PurM C-terminal domain-like"/>
    <property type="match status" value="2"/>
</dbReference>
<dbReference type="SUPFAM" id="SSF55326">
    <property type="entry name" value="PurM N-terminal domain-like"/>
    <property type="match status" value="2"/>
</dbReference>
<keyword id="KW-0067">ATP-binding</keyword>
<keyword id="KW-0963">Cytoplasm</keyword>
<keyword id="KW-0436">Ligase</keyword>
<keyword id="KW-0460">Magnesium</keyword>
<keyword id="KW-0479">Metal-binding</keyword>
<keyword id="KW-0547">Nucleotide-binding</keyword>
<keyword id="KW-0658">Purine biosynthesis</keyword>
<protein>
    <recommendedName>
        <fullName evidence="1">Phosphoribosylformylglycinamidine synthase subunit PurL</fullName>
        <shortName evidence="1">FGAM synthase</shortName>
        <ecNumber evidence="1">6.3.5.3</ecNumber>
    </recommendedName>
    <alternativeName>
        <fullName evidence="1">Formylglycinamide ribonucleotide amidotransferase subunit II</fullName>
        <shortName evidence="1">FGAR amidotransferase II</shortName>
        <shortName evidence="1">FGAR-AT II</shortName>
    </alternativeName>
    <alternativeName>
        <fullName evidence="1">Glutamine amidotransferase PurL</fullName>
    </alternativeName>
    <alternativeName>
        <fullName evidence="1">Phosphoribosylformylglycinamidine synthase subunit II</fullName>
    </alternativeName>
</protein>
<feature type="chain" id="PRO_1000050314" description="Phosphoribosylformylglycinamidine synthase subunit PurL">
    <location>
        <begin position="1"/>
        <end position="740"/>
    </location>
</feature>
<feature type="active site" evidence="1">
    <location>
        <position position="53"/>
    </location>
</feature>
<feature type="active site" description="Proton acceptor" evidence="1">
    <location>
        <position position="99"/>
    </location>
</feature>
<feature type="binding site" evidence="1">
    <location>
        <position position="56"/>
    </location>
    <ligand>
        <name>ATP</name>
        <dbReference type="ChEBI" id="CHEBI:30616"/>
    </ligand>
</feature>
<feature type="binding site" evidence="1">
    <location>
        <position position="95"/>
    </location>
    <ligand>
        <name>ATP</name>
        <dbReference type="ChEBI" id="CHEBI:30616"/>
    </ligand>
</feature>
<feature type="binding site" evidence="1">
    <location>
        <position position="97"/>
    </location>
    <ligand>
        <name>Mg(2+)</name>
        <dbReference type="ChEBI" id="CHEBI:18420"/>
        <label>1</label>
    </ligand>
</feature>
<feature type="binding site" evidence="1">
    <location>
        <begin position="98"/>
        <end position="101"/>
    </location>
    <ligand>
        <name>substrate</name>
    </ligand>
</feature>
<feature type="binding site" evidence="1">
    <location>
        <position position="120"/>
    </location>
    <ligand>
        <name>substrate</name>
    </ligand>
</feature>
<feature type="binding site" evidence="1">
    <location>
        <position position="121"/>
    </location>
    <ligand>
        <name>Mg(2+)</name>
        <dbReference type="ChEBI" id="CHEBI:18420"/>
        <label>2</label>
    </ligand>
</feature>
<feature type="binding site" evidence="1">
    <location>
        <position position="244"/>
    </location>
    <ligand>
        <name>substrate</name>
    </ligand>
</feature>
<feature type="binding site" evidence="1">
    <location>
        <position position="274"/>
    </location>
    <ligand>
        <name>Mg(2+)</name>
        <dbReference type="ChEBI" id="CHEBI:18420"/>
        <label>2</label>
    </ligand>
</feature>
<feature type="binding site" evidence="1">
    <location>
        <begin position="318"/>
        <end position="320"/>
    </location>
    <ligand>
        <name>substrate</name>
    </ligand>
</feature>
<feature type="binding site" evidence="1">
    <location>
        <position position="501"/>
    </location>
    <ligand>
        <name>ATP</name>
        <dbReference type="ChEBI" id="CHEBI:30616"/>
    </ligand>
</feature>
<feature type="binding site" evidence="1">
    <location>
        <position position="538"/>
    </location>
    <ligand>
        <name>ATP</name>
        <dbReference type="ChEBI" id="CHEBI:30616"/>
    </ligand>
</feature>
<feature type="binding site" evidence="1">
    <location>
        <position position="539"/>
    </location>
    <ligand>
        <name>Mg(2+)</name>
        <dbReference type="ChEBI" id="CHEBI:18420"/>
        <label>1</label>
    </ligand>
</feature>
<feature type="binding site" evidence="1">
    <location>
        <position position="541"/>
    </location>
    <ligand>
        <name>substrate</name>
    </ligand>
</feature>
<comment type="function">
    <text evidence="1">Part of the phosphoribosylformylglycinamidine synthase complex involved in the purines biosynthetic pathway. Catalyzes the ATP-dependent conversion of formylglycinamide ribonucleotide (FGAR) and glutamine to yield formylglycinamidine ribonucleotide (FGAM) and glutamate. The FGAM synthase complex is composed of three subunits. PurQ produces an ammonia molecule by converting glutamine to glutamate. PurL transfers the ammonia molecule to FGAR to form FGAM in an ATP-dependent manner. PurS interacts with PurQ and PurL and is thought to assist in the transfer of the ammonia molecule from PurQ to PurL.</text>
</comment>
<comment type="catalytic activity">
    <reaction evidence="1">
        <text>N(2)-formyl-N(1)-(5-phospho-beta-D-ribosyl)glycinamide + L-glutamine + ATP + H2O = 2-formamido-N(1)-(5-O-phospho-beta-D-ribosyl)acetamidine + L-glutamate + ADP + phosphate + H(+)</text>
        <dbReference type="Rhea" id="RHEA:17129"/>
        <dbReference type="ChEBI" id="CHEBI:15377"/>
        <dbReference type="ChEBI" id="CHEBI:15378"/>
        <dbReference type="ChEBI" id="CHEBI:29985"/>
        <dbReference type="ChEBI" id="CHEBI:30616"/>
        <dbReference type="ChEBI" id="CHEBI:43474"/>
        <dbReference type="ChEBI" id="CHEBI:58359"/>
        <dbReference type="ChEBI" id="CHEBI:147286"/>
        <dbReference type="ChEBI" id="CHEBI:147287"/>
        <dbReference type="ChEBI" id="CHEBI:456216"/>
        <dbReference type="EC" id="6.3.5.3"/>
    </reaction>
</comment>
<comment type="pathway">
    <text evidence="1">Purine metabolism; IMP biosynthesis via de novo pathway; 5-amino-1-(5-phospho-D-ribosyl)imidazole from N(2)-formyl-N(1)-(5-phospho-D-ribosyl)glycinamide: step 1/2.</text>
</comment>
<comment type="subunit">
    <text evidence="1">Monomer. Part of the FGAM synthase complex composed of 1 PurL, 1 PurQ and 2 PurS subunits.</text>
</comment>
<comment type="subcellular location">
    <subcellularLocation>
        <location evidence="1">Cytoplasm</location>
    </subcellularLocation>
</comment>
<comment type="similarity">
    <text evidence="1">Belongs to the FGAMS family.</text>
</comment>
<evidence type="ECO:0000255" key="1">
    <source>
        <dbReference type="HAMAP-Rule" id="MF_00420"/>
    </source>
</evidence>
<sequence length="740" mass="80011">MMQEMTPEEIKEKKPYLDWSLSEEEYDYICDKLLHRLPNYTETGLFAAMWSEHCSYKKSKSVLRLFPTKGPRILQGPGEGAGVVDIGDGQAVVFKAESHNHPTAVEPYQGAATGVGGILRDVFSMGARPVATLDSLHFGELDDAHTRWLLNETVAGIGGYGNCMGIPTVGGELTFDDIYKGNPVMNAMSVGLLDVKDMQKGLAQGEGNAVMYVGAKTGRDGIHGATFASHSFDSEHESQRSAVQVGDPFMEKLLLEACLELTQKHADWLVGIQDMGAAGIVSSSSEMASEGKSGMELNLDLVPQRESGMSAYEIMLSESQERMLLCVKKGHEEDVKKIFDFYDLDAVVIGRITSGHNYVLRHHGEVVCDIPVTSLTEDVLEEPSEEKQPQHMIDDAAKPAWEPEITDLAKTYKQMLAQPTIASKGMFTQTYDSMVRTSTVVGPGEDSGVLRVRGTHKGIAMTTDGNGRFIYLDPEIGGKRAVVEAAGNIIASGAEPLAITDCLNFGNPNEPEVFWELHHSVMGIAKACEVLETPVVSGNVSLYNETDGKSIYPTPMVGMVGLVKNLDHLVRDSFQEEGDDLYLVGQTGADYAGSELQKMLTGEIFGSLNDLDLDHIKDYQKRLLAQMEAGHVASAHDLSEGGLAVSLAESSFGHGIGAEVACDLTSAELFSETPGRFLVSVPSEYSAEFAAALAADAVKIGQTAGDSLKLTLKDQAADLPVAELKQIWEEALPCLMKSKD</sequence>
<name>PURL_LACDB</name>